<gene>
    <name evidence="1" type="primary">folD</name>
    <name type="ordered locus">sce3713</name>
</gene>
<organism>
    <name type="scientific">Sorangium cellulosum (strain So ce56)</name>
    <name type="common">Polyangium cellulosum (strain So ce56)</name>
    <dbReference type="NCBI Taxonomy" id="448385"/>
    <lineage>
        <taxon>Bacteria</taxon>
        <taxon>Pseudomonadati</taxon>
        <taxon>Myxococcota</taxon>
        <taxon>Polyangia</taxon>
        <taxon>Polyangiales</taxon>
        <taxon>Polyangiaceae</taxon>
        <taxon>Sorangium</taxon>
    </lineage>
</organism>
<keyword id="KW-0028">Amino-acid biosynthesis</keyword>
<keyword id="KW-0368">Histidine biosynthesis</keyword>
<keyword id="KW-0378">Hydrolase</keyword>
<keyword id="KW-0486">Methionine biosynthesis</keyword>
<keyword id="KW-0511">Multifunctional enzyme</keyword>
<keyword id="KW-0521">NADP</keyword>
<keyword id="KW-0554">One-carbon metabolism</keyword>
<keyword id="KW-0560">Oxidoreductase</keyword>
<keyword id="KW-0658">Purine biosynthesis</keyword>
<keyword id="KW-1185">Reference proteome</keyword>
<sequence>MAAKILDGKAIAQKVRDEVREGVARFVAAHGRPPGLEVVLVGEDPASVTHTRSKERMSNEVGIRGRLRALPAATTEAELLACVAELDADDTVDGILVQLPLPARIRAHAVLDAIDPAKDVDGLHPVNAGLLAMGRPGGIAPCTPVGCMRLLAEAGVELAGARAVVVGRSNLVGRPMAQLLLARHATVAIAHTRTRDLKALCREADVLVVAAGKAKLIGGDWIKEGATVIDVGMNRDDAGKLVGDVDFDAVRERAAWITPVPGGVGPMTIASLLETTLRAAEARVAKR</sequence>
<feature type="chain" id="PRO_1000087921" description="Bifunctional protein FolD">
    <location>
        <begin position="1"/>
        <end position="287"/>
    </location>
</feature>
<feature type="binding site" evidence="1">
    <location>
        <begin position="167"/>
        <end position="169"/>
    </location>
    <ligand>
        <name>NADP(+)</name>
        <dbReference type="ChEBI" id="CHEBI:58349"/>
    </ligand>
</feature>
<feature type="binding site" evidence="1">
    <location>
        <position position="192"/>
    </location>
    <ligand>
        <name>NADP(+)</name>
        <dbReference type="ChEBI" id="CHEBI:58349"/>
    </ligand>
</feature>
<protein>
    <recommendedName>
        <fullName evidence="1">Bifunctional protein FolD</fullName>
    </recommendedName>
    <domain>
        <recommendedName>
            <fullName evidence="1">Methylenetetrahydrofolate dehydrogenase</fullName>
            <ecNumber evidence="1">1.5.1.5</ecNumber>
        </recommendedName>
    </domain>
    <domain>
        <recommendedName>
            <fullName evidence="1">Methenyltetrahydrofolate cyclohydrolase</fullName>
            <ecNumber evidence="1">3.5.4.9</ecNumber>
        </recommendedName>
    </domain>
</protein>
<evidence type="ECO:0000255" key="1">
    <source>
        <dbReference type="HAMAP-Rule" id="MF_01576"/>
    </source>
</evidence>
<comment type="function">
    <text evidence="1">Catalyzes the oxidation of 5,10-methylenetetrahydrofolate to 5,10-methenyltetrahydrofolate and then the hydrolysis of 5,10-methenyltetrahydrofolate to 10-formyltetrahydrofolate.</text>
</comment>
<comment type="catalytic activity">
    <reaction evidence="1">
        <text>(6R)-5,10-methylene-5,6,7,8-tetrahydrofolate + NADP(+) = (6R)-5,10-methenyltetrahydrofolate + NADPH</text>
        <dbReference type="Rhea" id="RHEA:22812"/>
        <dbReference type="ChEBI" id="CHEBI:15636"/>
        <dbReference type="ChEBI" id="CHEBI:57455"/>
        <dbReference type="ChEBI" id="CHEBI:57783"/>
        <dbReference type="ChEBI" id="CHEBI:58349"/>
        <dbReference type="EC" id="1.5.1.5"/>
    </reaction>
</comment>
<comment type="catalytic activity">
    <reaction evidence="1">
        <text>(6R)-5,10-methenyltetrahydrofolate + H2O = (6R)-10-formyltetrahydrofolate + H(+)</text>
        <dbReference type="Rhea" id="RHEA:23700"/>
        <dbReference type="ChEBI" id="CHEBI:15377"/>
        <dbReference type="ChEBI" id="CHEBI:15378"/>
        <dbReference type="ChEBI" id="CHEBI:57455"/>
        <dbReference type="ChEBI" id="CHEBI:195366"/>
        <dbReference type="EC" id="3.5.4.9"/>
    </reaction>
</comment>
<comment type="pathway">
    <text evidence="1">One-carbon metabolism; tetrahydrofolate interconversion.</text>
</comment>
<comment type="subunit">
    <text evidence="1">Homodimer.</text>
</comment>
<comment type="similarity">
    <text evidence="1">Belongs to the tetrahydrofolate dehydrogenase/cyclohydrolase family.</text>
</comment>
<proteinExistence type="inferred from homology"/>
<accession>A9GW22</accession>
<dbReference type="EC" id="1.5.1.5" evidence="1"/>
<dbReference type="EC" id="3.5.4.9" evidence="1"/>
<dbReference type="EMBL" id="AM746676">
    <property type="protein sequence ID" value="CAN93873.1"/>
    <property type="molecule type" value="Genomic_DNA"/>
</dbReference>
<dbReference type="RefSeq" id="WP_012236343.1">
    <property type="nucleotide sequence ID" value="NC_010162.1"/>
</dbReference>
<dbReference type="SMR" id="A9GW22"/>
<dbReference type="STRING" id="448385.sce3713"/>
<dbReference type="KEGG" id="scl:sce3713"/>
<dbReference type="eggNOG" id="COG0190">
    <property type="taxonomic scope" value="Bacteria"/>
</dbReference>
<dbReference type="HOGENOM" id="CLU_034045_2_1_7"/>
<dbReference type="OrthoDB" id="9803580at2"/>
<dbReference type="BioCyc" id="SCEL448385:SCE_RS19020-MONOMER"/>
<dbReference type="UniPathway" id="UPA00193"/>
<dbReference type="Proteomes" id="UP000002139">
    <property type="component" value="Chromosome"/>
</dbReference>
<dbReference type="GO" id="GO:0005829">
    <property type="term" value="C:cytosol"/>
    <property type="evidence" value="ECO:0007669"/>
    <property type="project" value="TreeGrafter"/>
</dbReference>
<dbReference type="GO" id="GO:0004477">
    <property type="term" value="F:methenyltetrahydrofolate cyclohydrolase activity"/>
    <property type="evidence" value="ECO:0007669"/>
    <property type="project" value="UniProtKB-UniRule"/>
</dbReference>
<dbReference type="GO" id="GO:0004488">
    <property type="term" value="F:methylenetetrahydrofolate dehydrogenase (NADP+) activity"/>
    <property type="evidence" value="ECO:0007669"/>
    <property type="project" value="UniProtKB-UniRule"/>
</dbReference>
<dbReference type="GO" id="GO:0000105">
    <property type="term" value="P:L-histidine biosynthetic process"/>
    <property type="evidence" value="ECO:0007669"/>
    <property type="project" value="UniProtKB-KW"/>
</dbReference>
<dbReference type="GO" id="GO:0009086">
    <property type="term" value="P:methionine biosynthetic process"/>
    <property type="evidence" value="ECO:0007669"/>
    <property type="project" value="UniProtKB-KW"/>
</dbReference>
<dbReference type="GO" id="GO:0006164">
    <property type="term" value="P:purine nucleotide biosynthetic process"/>
    <property type="evidence" value="ECO:0007669"/>
    <property type="project" value="UniProtKB-KW"/>
</dbReference>
<dbReference type="GO" id="GO:0035999">
    <property type="term" value="P:tetrahydrofolate interconversion"/>
    <property type="evidence" value="ECO:0007669"/>
    <property type="project" value="UniProtKB-UniRule"/>
</dbReference>
<dbReference type="CDD" id="cd01080">
    <property type="entry name" value="NAD_bind_m-THF_DH_Cyclohyd"/>
    <property type="match status" value="1"/>
</dbReference>
<dbReference type="FunFam" id="3.40.50.720:FF:000094">
    <property type="entry name" value="Bifunctional protein FolD"/>
    <property type="match status" value="1"/>
</dbReference>
<dbReference type="FunFam" id="3.40.50.10860:FF:000005">
    <property type="entry name" value="C-1-tetrahydrofolate synthase, cytoplasmic, putative"/>
    <property type="match status" value="1"/>
</dbReference>
<dbReference type="Gene3D" id="3.40.50.10860">
    <property type="entry name" value="Leucine Dehydrogenase, chain A, domain 1"/>
    <property type="match status" value="1"/>
</dbReference>
<dbReference type="Gene3D" id="3.40.50.720">
    <property type="entry name" value="NAD(P)-binding Rossmann-like Domain"/>
    <property type="match status" value="1"/>
</dbReference>
<dbReference type="HAMAP" id="MF_01576">
    <property type="entry name" value="THF_DHG_CYH"/>
    <property type="match status" value="1"/>
</dbReference>
<dbReference type="InterPro" id="IPR046346">
    <property type="entry name" value="Aminoacid_DH-like_N_sf"/>
</dbReference>
<dbReference type="InterPro" id="IPR036291">
    <property type="entry name" value="NAD(P)-bd_dom_sf"/>
</dbReference>
<dbReference type="InterPro" id="IPR000672">
    <property type="entry name" value="THF_DH/CycHdrlase"/>
</dbReference>
<dbReference type="InterPro" id="IPR020630">
    <property type="entry name" value="THF_DH/CycHdrlase_cat_dom"/>
</dbReference>
<dbReference type="InterPro" id="IPR020867">
    <property type="entry name" value="THF_DH/CycHdrlase_CS"/>
</dbReference>
<dbReference type="InterPro" id="IPR020631">
    <property type="entry name" value="THF_DH/CycHdrlase_NAD-bd_dom"/>
</dbReference>
<dbReference type="NCBIfam" id="NF008058">
    <property type="entry name" value="PRK10792.1"/>
    <property type="match status" value="1"/>
</dbReference>
<dbReference type="PANTHER" id="PTHR48099:SF5">
    <property type="entry name" value="C-1-TETRAHYDROFOLATE SYNTHASE, CYTOPLASMIC"/>
    <property type="match status" value="1"/>
</dbReference>
<dbReference type="PANTHER" id="PTHR48099">
    <property type="entry name" value="C-1-TETRAHYDROFOLATE SYNTHASE, CYTOPLASMIC-RELATED"/>
    <property type="match status" value="1"/>
</dbReference>
<dbReference type="Pfam" id="PF00763">
    <property type="entry name" value="THF_DHG_CYH"/>
    <property type="match status" value="1"/>
</dbReference>
<dbReference type="Pfam" id="PF02882">
    <property type="entry name" value="THF_DHG_CYH_C"/>
    <property type="match status" value="1"/>
</dbReference>
<dbReference type="PRINTS" id="PR00085">
    <property type="entry name" value="THFDHDRGNASE"/>
</dbReference>
<dbReference type="SUPFAM" id="SSF53223">
    <property type="entry name" value="Aminoacid dehydrogenase-like, N-terminal domain"/>
    <property type="match status" value="1"/>
</dbReference>
<dbReference type="SUPFAM" id="SSF51735">
    <property type="entry name" value="NAD(P)-binding Rossmann-fold domains"/>
    <property type="match status" value="1"/>
</dbReference>
<dbReference type="PROSITE" id="PS00767">
    <property type="entry name" value="THF_DHG_CYH_2"/>
    <property type="match status" value="1"/>
</dbReference>
<name>FOLD_SORC5</name>
<reference key="1">
    <citation type="journal article" date="2007" name="Nat. Biotechnol.">
        <title>Complete genome sequence of the myxobacterium Sorangium cellulosum.</title>
        <authorList>
            <person name="Schneiker S."/>
            <person name="Perlova O."/>
            <person name="Kaiser O."/>
            <person name="Gerth K."/>
            <person name="Alici A."/>
            <person name="Altmeyer M.O."/>
            <person name="Bartels D."/>
            <person name="Bekel T."/>
            <person name="Beyer S."/>
            <person name="Bode E."/>
            <person name="Bode H.B."/>
            <person name="Bolten C.J."/>
            <person name="Choudhuri J.V."/>
            <person name="Doss S."/>
            <person name="Elnakady Y.A."/>
            <person name="Frank B."/>
            <person name="Gaigalat L."/>
            <person name="Goesmann A."/>
            <person name="Groeger C."/>
            <person name="Gross F."/>
            <person name="Jelsbak L."/>
            <person name="Jelsbak L."/>
            <person name="Kalinowski J."/>
            <person name="Kegler C."/>
            <person name="Knauber T."/>
            <person name="Konietzny S."/>
            <person name="Kopp M."/>
            <person name="Krause L."/>
            <person name="Krug D."/>
            <person name="Linke B."/>
            <person name="Mahmud T."/>
            <person name="Martinez-Arias R."/>
            <person name="McHardy A.C."/>
            <person name="Merai M."/>
            <person name="Meyer F."/>
            <person name="Mormann S."/>
            <person name="Munoz-Dorado J."/>
            <person name="Perez J."/>
            <person name="Pradella S."/>
            <person name="Rachid S."/>
            <person name="Raddatz G."/>
            <person name="Rosenau F."/>
            <person name="Rueckert C."/>
            <person name="Sasse F."/>
            <person name="Scharfe M."/>
            <person name="Schuster S.C."/>
            <person name="Suen G."/>
            <person name="Treuner-Lange A."/>
            <person name="Velicer G.J."/>
            <person name="Vorholter F.-J."/>
            <person name="Weissman K.J."/>
            <person name="Welch R.D."/>
            <person name="Wenzel S.C."/>
            <person name="Whitworth D.E."/>
            <person name="Wilhelm S."/>
            <person name="Wittmann C."/>
            <person name="Bloecker H."/>
            <person name="Puehler A."/>
            <person name="Mueller R."/>
        </authorList>
    </citation>
    <scope>NUCLEOTIDE SEQUENCE [LARGE SCALE GENOMIC DNA]</scope>
    <source>
        <strain>So ce56</strain>
    </source>
</reference>